<protein>
    <recommendedName>
        <fullName evidence="1">tRNA-2-methylthio-N(6)-dimethylallyladenosine synthase</fullName>
        <ecNumber evidence="1">2.8.4.3</ecNumber>
    </recommendedName>
    <alternativeName>
        <fullName evidence="1">(Dimethylallyl)adenosine tRNA methylthiotransferase MiaB</fullName>
    </alternativeName>
    <alternativeName>
        <fullName evidence="1">tRNA-i(6)A37 methylthiotransferase</fullName>
    </alternativeName>
</protein>
<proteinExistence type="inferred from homology"/>
<feature type="chain" id="PRO_0000374315" description="tRNA-2-methylthio-N(6)-dimethylallyladenosine synthase">
    <location>
        <begin position="1"/>
        <end position="531"/>
    </location>
</feature>
<feature type="domain" description="MTTase N-terminal" evidence="1">
    <location>
        <begin position="80"/>
        <end position="198"/>
    </location>
</feature>
<feature type="domain" description="Radical SAM core" evidence="2">
    <location>
        <begin position="221"/>
        <end position="451"/>
    </location>
</feature>
<feature type="domain" description="TRAM" evidence="1">
    <location>
        <begin position="454"/>
        <end position="517"/>
    </location>
</feature>
<feature type="region of interest" description="Disordered" evidence="3">
    <location>
        <begin position="1"/>
        <end position="26"/>
    </location>
</feature>
<feature type="compositionally biased region" description="Basic and acidic residues" evidence="3">
    <location>
        <begin position="15"/>
        <end position="26"/>
    </location>
</feature>
<feature type="binding site" evidence="1">
    <location>
        <position position="89"/>
    </location>
    <ligand>
        <name>[4Fe-4S] cluster</name>
        <dbReference type="ChEBI" id="CHEBI:49883"/>
        <label>1</label>
    </ligand>
</feature>
<feature type="binding site" evidence="1">
    <location>
        <position position="125"/>
    </location>
    <ligand>
        <name>[4Fe-4S] cluster</name>
        <dbReference type="ChEBI" id="CHEBI:49883"/>
        <label>1</label>
    </ligand>
</feature>
<feature type="binding site" evidence="1">
    <location>
        <position position="159"/>
    </location>
    <ligand>
        <name>[4Fe-4S] cluster</name>
        <dbReference type="ChEBI" id="CHEBI:49883"/>
        <label>1</label>
    </ligand>
</feature>
<feature type="binding site" evidence="1">
    <location>
        <position position="235"/>
    </location>
    <ligand>
        <name>[4Fe-4S] cluster</name>
        <dbReference type="ChEBI" id="CHEBI:49883"/>
        <label>2</label>
        <note>4Fe-4S-S-AdoMet</note>
    </ligand>
</feature>
<feature type="binding site" evidence="1">
    <location>
        <position position="239"/>
    </location>
    <ligand>
        <name>[4Fe-4S] cluster</name>
        <dbReference type="ChEBI" id="CHEBI:49883"/>
        <label>2</label>
        <note>4Fe-4S-S-AdoMet</note>
    </ligand>
</feature>
<feature type="binding site" evidence="1">
    <location>
        <position position="242"/>
    </location>
    <ligand>
        <name>[4Fe-4S] cluster</name>
        <dbReference type="ChEBI" id="CHEBI:49883"/>
        <label>2</label>
        <note>4Fe-4S-S-AdoMet</note>
    </ligand>
</feature>
<accession>Q5L0E8</accession>
<evidence type="ECO:0000255" key="1">
    <source>
        <dbReference type="HAMAP-Rule" id="MF_01864"/>
    </source>
</evidence>
<evidence type="ECO:0000255" key="2">
    <source>
        <dbReference type="PROSITE-ProRule" id="PRU01266"/>
    </source>
</evidence>
<evidence type="ECO:0000256" key="3">
    <source>
        <dbReference type="SAM" id="MobiDB-lite"/>
    </source>
</evidence>
<name>MIAB_GEOKA</name>
<reference key="1">
    <citation type="journal article" date="2004" name="Nucleic Acids Res.">
        <title>Thermoadaptation trait revealed by the genome sequence of thermophilic Geobacillus kaustophilus.</title>
        <authorList>
            <person name="Takami H."/>
            <person name="Takaki Y."/>
            <person name="Chee G.-J."/>
            <person name="Nishi S."/>
            <person name="Shimamura S."/>
            <person name="Suzuki H."/>
            <person name="Matsui S."/>
            <person name="Uchiyama I."/>
        </authorList>
    </citation>
    <scope>NUCLEOTIDE SEQUENCE [LARGE SCALE GENOMIC DNA]</scope>
    <source>
        <strain>HTA426</strain>
    </source>
</reference>
<organism>
    <name type="scientific">Geobacillus kaustophilus (strain HTA426)</name>
    <dbReference type="NCBI Taxonomy" id="235909"/>
    <lineage>
        <taxon>Bacteria</taxon>
        <taxon>Bacillati</taxon>
        <taxon>Bacillota</taxon>
        <taxon>Bacilli</taxon>
        <taxon>Bacillales</taxon>
        <taxon>Anoxybacillaceae</taxon>
        <taxon>Geobacillus</taxon>
        <taxon>Geobacillus thermoleovorans group</taxon>
    </lineage>
</organism>
<keyword id="KW-0004">4Fe-4S</keyword>
<keyword id="KW-0963">Cytoplasm</keyword>
<keyword id="KW-0408">Iron</keyword>
<keyword id="KW-0411">Iron-sulfur</keyword>
<keyword id="KW-0479">Metal-binding</keyword>
<keyword id="KW-1185">Reference proteome</keyword>
<keyword id="KW-0949">S-adenosyl-L-methionine</keyword>
<keyword id="KW-0808">Transferase</keyword>
<keyword id="KW-0819">tRNA processing</keyword>
<sequence>MNEKQRLEQTGQIKTESHPADRKSALDRLKEKTTKDYEKYFTSVFLPPNLKEAKKRGKEEVKYVKDFSIPEEFRGMGRGRKFYIRTYGCQMNEHDTEVMAGIFMALGYEPTDRPEEANVILLNTCAIRENAENKVFGELGYLKPLKTTNPDLLLGVCGCMSQEESVVKKILKQYQYVDLIFGTHNIHRLPYILHEAYMSKEMVVEVWSKEGDVVENLPKVRKGKIKAWVNIMYGCDKFCTYCIVPYTRGKERSRRPEDIIQEVRQLAAQGYKEITLLGQNVNAYGKDFTDIQYGLGDLMDELRKIDIARIRFTTSHPRDFDDRLIEVLAKRGNLVEHIHLPVQSGSTEILKMMGRKYTREEYLELVRKIKAAIPDVALTTDIIVGFPNETDEQFEETLSLYREVEFDSAYTFIYSPREGTPAANMKDNVPMEVKKERLKRLNDLVQEIAAKKMKQYEGQVVEVLVEGESKTNPDVLAGYTRKNKLVHFVGPKSLIGQLVNVRITQAKTWTLTGELVNEAIEVNEHGKIYAG</sequence>
<gene>
    <name evidence="1" type="primary">miaB</name>
    <name type="ordered locus">GK1303</name>
</gene>
<comment type="function">
    <text evidence="1">Catalyzes the methylthiolation of N6-(dimethylallyl)adenosine (i(6)A), leading to the formation of 2-methylthio-N6-(dimethylallyl)adenosine (ms(2)i(6)A) at position 37 in tRNAs that read codons beginning with uridine.</text>
</comment>
<comment type="catalytic activity">
    <reaction evidence="1">
        <text>N(6)-dimethylallyladenosine(37) in tRNA + (sulfur carrier)-SH + AH2 + 2 S-adenosyl-L-methionine = 2-methylsulfanyl-N(6)-dimethylallyladenosine(37) in tRNA + (sulfur carrier)-H + 5'-deoxyadenosine + L-methionine + A + S-adenosyl-L-homocysteine + 2 H(+)</text>
        <dbReference type="Rhea" id="RHEA:37067"/>
        <dbReference type="Rhea" id="RHEA-COMP:10375"/>
        <dbReference type="Rhea" id="RHEA-COMP:10376"/>
        <dbReference type="Rhea" id="RHEA-COMP:14737"/>
        <dbReference type="Rhea" id="RHEA-COMP:14739"/>
        <dbReference type="ChEBI" id="CHEBI:13193"/>
        <dbReference type="ChEBI" id="CHEBI:15378"/>
        <dbReference type="ChEBI" id="CHEBI:17319"/>
        <dbReference type="ChEBI" id="CHEBI:17499"/>
        <dbReference type="ChEBI" id="CHEBI:29917"/>
        <dbReference type="ChEBI" id="CHEBI:57844"/>
        <dbReference type="ChEBI" id="CHEBI:57856"/>
        <dbReference type="ChEBI" id="CHEBI:59789"/>
        <dbReference type="ChEBI" id="CHEBI:64428"/>
        <dbReference type="ChEBI" id="CHEBI:74415"/>
        <dbReference type="ChEBI" id="CHEBI:74417"/>
        <dbReference type="EC" id="2.8.4.3"/>
    </reaction>
</comment>
<comment type="cofactor">
    <cofactor evidence="1">
        <name>[4Fe-4S] cluster</name>
        <dbReference type="ChEBI" id="CHEBI:49883"/>
    </cofactor>
    <text evidence="1">Binds 2 [4Fe-4S] clusters. One cluster is coordinated with 3 cysteines and an exchangeable S-adenosyl-L-methionine.</text>
</comment>
<comment type="subunit">
    <text evidence="1">Monomer.</text>
</comment>
<comment type="subcellular location">
    <subcellularLocation>
        <location evidence="1">Cytoplasm</location>
    </subcellularLocation>
</comment>
<comment type="similarity">
    <text evidence="1">Belongs to the methylthiotransferase family. MiaB subfamily.</text>
</comment>
<dbReference type="EC" id="2.8.4.3" evidence="1"/>
<dbReference type="EMBL" id="BA000043">
    <property type="protein sequence ID" value="BAD75588.1"/>
    <property type="molecule type" value="Genomic_DNA"/>
</dbReference>
<dbReference type="RefSeq" id="WP_011230802.1">
    <property type="nucleotide sequence ID" value="NC_006510.1"/>
</dbReference>
<dbReference type="SMR" id="Q5L0E8"/>
<dbReference type="STRING" id="235909.GK1303"/>
<dbReference type="GeneID" id="32063199"/>
<dbReference type="KEGG" id="gka:GK1303"/>
<dbReference type="eggNOG" id="COG0621">
    <property type="taxonomic scope" value="Bacteria"/>
</dbReference>
<dbReference type="HOGENOM" id="CLU_018697_2_0_9"/>
<dbReference type="Proteomes" id="UP000001172">
    <property type="component" value="Chromosome"/>
</dbReference>
<dbReference type="GO" id="GO:0005829">
    <property type="term" value="C:cytosol"/>
    <property type="evidence" value="ECO:0007669"/>
    <property type="project" value="TreeGrafter"/>
</dbReference>
<dbReference type="GO" id="GO:0051539">
    <property type="term" value="F:4 iron, 4 sulfur cluster binding"/>
    <property type="evidence" value="ECO:0007669"/>
    <property type="project" value="UniProtKB-UniRule"/>
</dbReference>
<dbReference type="GO" id="GO:0046872">
    <property type="term" value="F:metal ion binding"/>
    <property type="evidence" value="ECO:0007669"/>
    <property type="project" value="UniProtKB-KW"/>
</dbReference>
<dbReference type="GO" id="GO:0035597">
    <property type="term" value="F:N6-isopentenyladenosine methylthiotransferase activity"/>
    <property type="evidence" value="ECO:0007669"/>
    <property type="project" value="TreeGrafter"/>
</dbReference>
<dbReference type="CDD" id="cd01335">
    <property type="entry name" value="Radical_SAM"/>
    <property type="match status" value="1"/>
</dbReference>
<dbReference type="FunFam" id="3.40.50.12160:FF:000006">
    <property type="entry name" value="tRNA-2-methylthio-N(6)-dimethylallyladenosine synthase"/>
    <property type="match status" value="1"/>
</dbReference>
<dbReference type="FunFam" id="3.80.30.20:FF:000001">
    <property type="entry name" value="tRNA-2-methylthio-N(6)-dimethylallyladenosine synthase 2"/>
    <property type="match status" value="1"/>
</dbReference>
<dbReference type="Gene3D" id="3.40.50.12160">
    <property type="entry name" value="Methylthiotransferase, N-terminal domain"/>
    <property type="match status" value="1"/>
</dbReference>
<dbReference type="Gene3D" id="3.80.30.20">
    <property type="entry name" value="tm_1862 like domain"/>
    <property type="match status" value="1"/>
</dbReference>
<dbReference type="HAMAP" id="MF_01864">
    <property type="entry name" value="tRNA_metthiotr_MiaB"/>
    <property type="match status" value="1"/>
</dbReference>
<dbReference type="InterPro" id="IPR006638">
    <property type="entry name" value="Elp3/MiaA/NifB-like_rSAM"/>
</dbReference>
<dbReference type="InterPro" id="IPR005839">
    <property type="entry name" value="Methylthiotransferase"/>
</dbReference>
<dbReference type="InterPro" id="IPR020612">
    <property type="entry name" value="Methylthiotransferase_CS"/>
</dbReference>
<dbReference type="InterPro" id="IPR013848">
    <property type="entry name" value="Methylthiotransferase_N"/>
</dbReference>
<dbReference type="InterPro" id="IPR038135">
    <property type="entry name" value="Methylthiotransferase_N_sf"/>
</dbReference>
<dbReference type="InterPro" id="IPR006463">
    <property type="entry name" value="MiaB_methiolase"/>
</dbReference>
<dbReference type="InterPro" id="IPR007197">
    <property type="entry name" value="rSAM"/>
</dbReference>
<dbReference type="InterPro" id="IPR023404">
    <property type="entry name" value="rSAM_horseshoe"/>
</dbReference>
<dbReference type="InterPro" id="IPR002792">
    <property type="entry name" value="TRAM_dom"/>
</dbReference>
<dbReference type="NCBIfam" id="TIGR01574">
    <property type="entry name" value="miaB-methiolase"/>
    <property type="match status" value="1"/>
</dbReference>
<dbReference type="NCBIfam" id="TIGR00089">
    <property type="entry name" value="MiaB/RimO family radical SAM methylthiotransferase"/>
    <property type="match status" value="1"/>
</dbReference>
<dbReference type="PANTHER" id="PTHR43020">
    <property type="entry name" value="CDK5 REGULATORY SUBUNIT-ASSOCIATED PROTEIN 1"/>
    <property type="match status" value="1"/>
</dbReference>
<dbReference type="PANTHER" id="PTHR43020:SF2">
    <property type="entry name" value="MITOCHONDRIAL TRNA METHYLTHIOTRANSFERASE CDK5RAP1"/>
    <property type="match status" value="1"/>
</dbReference>
<dbReference type="Pfam" id="PF04055">
    <property type="entry name" value="Radical_SAM"/>
    <property type="match status" value="1"/>
</dbReference>
<dbReference type="Pfam" id="PF01938">
    <property type="entry name" value="TRAM"/>
    <property type="match status" value="1"/>
</dbReference>
<dbReference type="Pfam" id="PF00919">
    <property type="entry name" value="UPF0004"/>
    <property type="match status" value="1"/>
</dbReference>
<dbReference type="SFLD" id="SFLDF00273">
    <property type="entry name" value="(dimethylallyl)adenosine_tRNA"/>
    <property type="match status" value="1"/>
</dbReference>
<dbReference type="SFLD" id="SFLDG01082">
    <property type="entry name" value="B12-binding_domain_containing"/>
    <property type="match status" value="1"/>
</dbReference>
<dbReference type="SFLD" id="SFLDS00029">
    <property type="entry name" value="Radical_SAM"/>
    <property type="match status" value="1"/>
</dbReference>
<dbReference type="SMART" id="SM00729">
    <property type="entry name" value="Elp3"/>
    <property type="match status" value="1"/>
</dbReference>
<dbReference type="SUPFAM" id="SSF102114">
    <property type="entry name" value="Radical SAM enzymes"/>
    <property type="match status" value="1"/>
</dbReference>
<dbReference type="PROSITE" id="PS51449">
    <property type="entry name" value="MTTASE_N"/>
    <property type="match status" value="1"/>
</dbReference>
<dbReference type="PROSITE" id="PS01278">
    <property type="entry name" value="MTTASE_RADICAL"/>
    <property type="match status" value="1"/>
</dbReference>
<dbReference type="PROSITE" id="PS51918">
    <property type="entry name" value="RADICAL_SAM"/>
    <property type="match status" value="1"/>
</dbReference>
<dbReference type="PROSITE" id="PS50926">
    <property type="entry name" value="TRAM"/>
    <property type="match status" value="1"/>
</dbReference>